<feature type="chain" id="PRO_1000099978" description="Uroporphyrinogen decarboxylase">
    <location>
        <begin position="1"/>
        <end position="356"/>
    </location>
</feature>
<feature type="binding site" evidence="1">
    <location>
        <begin position="27"/>
        <end position="31"/>
    </location>
    <ligand>
        <name>substrate</name>
    </ligand>
</feature>
<feature type="binding site" evidence="1">
    <location>
        <position position="77"/>
    </location>
    <ligand>
        <name>substrate</name>
    </ligand>
</feature>
<feature type="binding site" evidence="1">
    <location>
        <position position="154"/>
    </location>
    <ligand>
        <name>substrate</name>
    </ligand>
</feature>
<feature type="binding site" evidence="1">
    <location>
        <position position="209"/>
    </location>
    <ligand>
        <name>substrate</name>
    </ligand>
</feature>
<feature type="binding site" evidence="1">
    <location>
        <position position="327"/>
    </location>
    <ligand>
        <name>substrate</name>
    </ligand>
</feature>
<feature type="site" description="Transition state stabilizer" evidence="1">
    <location>
        <position position="77"/>
    </location>
</feature>
<organism>
    <name type="scientific">Cellvibrio japonicus (strain Ueda107)</name>
    <name type="common">Pseudomonas fluorescens subsp. cellulosa</name>
    <dbReference type="NCBI Taxonomy" id="498211"/>
    <lineage>
        <taxon>Bacteria</taxon>
        <taxon>Pseudomonadati</taxon>
        <taxon>Pseudomonadota</taxon>
        <taxon>Gammaproteobacteria</taxon>
        <taxon>Cellvibrionales</taxon>
        <taxon>Cellvibrionaceae</taxon>
        <taxon>Cellvibrio</taxon>
    </lineage>
</organism>
<proteinExistence type="inferred from homology"/>
<dbReference type="EC" id="4.1.1.37" evidence="1"/>
<dbReference type="EMBL" id="CP000934">
    <property type="protein sequence ID" value="ACE84576.1"/>
    <property type="molecule type" value="Genomic_DNA"/>
</dbReference>
<dbReference type="RefSeq" id="WP_012488721.1">
    <property type="nucleotide sequence ID" value="NC_010995.1"/>
</dbReference>
<dbReference type="SMR" id="B3PDU1"/>
<dbReference type="STRING" id="498211.CJA_3144"/>
<dbReference type="KEGG" id="cja:CJA_3144"/>
<dbReference type="eggNOG" id="COG0407">
    <property type="taxonomic scope" value="Bacteria"/>
</dbReference>
<dbReference type="HOGENOM" id="CLU_040933_0_0_6"/>
<dbReference type="OrthoDB" id="9806656at2"/>
<dbReference type="UniPathway" id="UPA00251">
    <property type="reaction ID" value="UER00321"/>
</dbReference>
<dbReference type="Proteomes" id="UP000001036">
    <property type="component" value="Chromosome"/>
</dbReference>
<dbReference type="GO" id="GO:0005829">
    <property type="term" value="C:cytosol"/>
    <property type="evidence" value="ECO:0007669"/>
    <property type="project" value="TreeGrafter"/>
</dbReference>
<dbReference type="GO" id="GO:0004853">
    <property type="term" value="F:uroporphyrinogen decarboxylase activity"/>
    <property type="evidence" value="ECO:0007669"/>
    <property type="project" value="UniProtKB-UniRule"/>
</dbReference>
<dbReference type="GO" id="GO:0019353">
    <property type="term" value="P:protoporphyrinogen IX biosynthetic process from glutamate"/>
    <property type="evidence" value="ECO:0007669"/>
    <property type="project" value="TreeGrafter"/>
</dbReference>
<dbReference type="CDD" id="cd00717">
    <property type="entry name" value="URO-D"/>
    <property type="match status" value="1"/>
</dbReference>
<dbReference type="FunFam" id="3.20.20.210:FF:000001">
    <property type="entry name" value="Uroporphyrinogen decarboxylase"/>
    <property type="match status" value="1"/>
</dbReference>
<dbReference type="Gene3D" id="3.20.20.210">
    <property type="match status" value="1"/>
</dbReference>
<dbReference type="HAMAP" id="MF_00218">
    <property type="entry name" value="URO_D"/>
    <property type="match status" value="1"/>
</dbReference>
<dbReference type="InterPro" id="IPR038071">
    <property type="entry name" value="UROD/MetE-like_sf"/>
</dbReference>
<dbReference type="InterPro" id="IPR006361">
    <property type="entry name" value="Uroporphyrinogen_deCO2ase_HemE"/>
</dbReference>
<dbReference type="InterPro" id="IPR000257">
    <property type="entry name" value="Uroporphyrinogen_deCOase"/>
</dbReference>
<dbReference type="NCBIfam" id="TIGR01464">
    <property type="entry name" value="hemE"/>
    <property type="match status" value="1"/>
</dbReference>
<dbReference type="PANTHER" id="PTHR21091">
    <property type="entry name" value="METHYLTETRAHYDROFOLATE:HOMOCYSTEINE METHYLTRANSFERASE RELATED"/>
    <property type="match status" value="1"/>
</dbReference>
<dbReference type="PANTHER" id="PTHR21091:SF169">
    <property type="entry name" value="UROPORPHYRINOGEN DECARBOXYLASE"/>
    <property type="match status" value="1"/>
</dbReference>
<dbReference type="Pfam" id="PF01208">
    <property type="entry name" value="URO-D"/>
    <property type="match status" value="1"/>
</dbReference>
<dbReference type="SUPFAM" id="SSF51726">
    <property type="entry name" value="UROD/MetE-like"/>
    <property type="match status" value="1"/>
</dbReference>
<dbReference type="PROSITE" id="PS00906">
    <property type="entry name" value="UROD_1"/>
    <property type="match status" value="1"/>
</dbReference>
<dbReference type="PROSITE" id="PS00907">
    <property type="entry name" value="UROD_2"/>
    <property type="match status" value="1"/>
</dbReference>
<evidence type="ECO:0000255" key="1">
    <source>
        <dbReference type="HAMAP-Rule" id="MF_00218"/>
    </source>
</evidence>
<reference key="1">
    <citation type="journal article" date="2008" name="J. Bacteriol.">
        <title>Insights into plant cell wall degradation from the genome sequence of the soil bacterium Cellvibrio japonicus.</title>
        <authorList>
            <person name="DeBoy R.T."/>
            <person name="Mongodin E.F."/>
            <person name="Fouts D.E."/>
            <person name="Tailford L.E."/>
            <person name="Khouri H."/>
            <person name="Emerson J.B."/>
            <person name="Mohamoud Y."/>
            <person name="Watkins K."/>
            <person name="Henrissat B."/>
            <person name="Gilbert H.J."/>
            <person name="Nelson K.E."/>
        </authorList>
    </citation>
    <scope>NUCLEOTIDE SEQUENCE [LARGE SCALE GENOMIC DNA]</scope>
    <source>
        <strain>Ueda107</strain>
    </source>
</reference>
<gene>
    <name evidence="1" type="primary">hemE</name>
    <name type="ordered locus">CJA_3144</name>
</gene>
<keyword id="KW-0963">Cytoplasm</keyword>
<keyword id="KW-0210">Decarboxylase</keyword>
<keyword id="KW-0456">Lyase</keyword>
<keyword id="KW-0627">Porphyrin biosynthesis</keyword>
<keyword id="KW-1185">Reference proteome</keyword>
<name>DCUP_CELJU</name>
<protein>
    <recommendedName>
        <fullName evidence="1">Uroporphyrinogen decarboxylase</fullName>
        <shortName evidence="1">UPD</shortName>
        <shortName evidence="1">URO-D</shortName>
        <ecNumber evidence="1">4.1.1.37</ecNumber>
    </recommendedName>
</protein>
<sequence length="356" mass="39147">MTPLNNDRFLRALLRQPVDVTPVWMMRQAGRYLPEYRATRARAGDFMGLCTNPELACEVTLQPLERYPLDAAILFSDILTIPDAMGLGLYFETGEGPKFHKAVRTEADVNALKVINPEQDLPYVVNAVKTIRRELNGRVPLIGFSGSPWTLATYMIEGGSSRDFRRAKEMLYNQPEVMHRLLDVLAESVIVYLNAQIRAGAQAVQIFDTWGGALSHNAYREFSLKYMEKIVAGLIGEHEGRQVPVILFTKGGGQWLDAMADTGATALGLDWTTDIAAARARVGNRVALQGNMDPGILYASPERIRAEVGNILAAYGQGSGHIFNLGHGITPEVDPEHAGAFIRAVHDLSAQYHTAG</sequence>
<comment type="function">
    <text evidence="1">Catalyzes the decarboxylation of four acetate groups of uroporphyrinogen-III to yield coproporphyrinogen-III.</text>
</comment>
<comment type="catalytic activity">
    <reaction evidence="1">
        <text>uroporphyrinogen III + 4 H(+) = coproporphyrinogen III + 4 CO2</text>
        <dbReference type="Rhea" id="RHEA:19865"/>
        <dbReference type="ChEBI" id="CHEBI:15378"/>
        <dbReference type="ChEBI" id="CHEBI:16526"/>
        <dbReference type="ChEBI" id="CHEBI:57308"/>
        <dbReference type="ChEBI" id="CHEBI:57309"/>
        <dbReference type="EC" id="4.1.1.37"/>
    </reaction>
</comment>
<comment type="pathway">
    <text evidence="1">Porphyrin-containing compound metabolism; protoporphyrin-IX biosynthesis; coproporphyrinogen-III from 5-aminolevulinate: step 4/4.</text>
</comment>
<comment type="subunit">
    <text evidence="1">Homodimer.</text>
</comment>
<comment type="subcellular location">
    <subcellularLocation>
        <location evidence="1">Cytoplasm</location>
    </subcellularLocation>
</comment>
<comment type="similarity">
    <text evidence="1">Belongs to the uroporphyrinogen decarboxylase family.</text>
</comment>
<accession>B3PDU1</accession>